<keyword id="KW-0067">ATP-binding</keyword>
<keyword id="KW-0133">Cell shape</keyword>
<keyword id="KW-0961">Cell wall biogenesis/degradation</keyword>
<keyword id="KW-0963">Cytoplasm</keyword>
<keyword id="KW-0436">Ligase</keyword>
<keyword id="KW-0460">Magnesium</keyword>
<keyword id="KW-0464">Manganese</keyword>
<keyword id="KW-0479">Metal-binding</keyword>
<keyword id="KW-0547">Nucleotide-binding</keyword>
<keyword id="KW-0573">Peptidoglycan synthesis</keyword>
<keyword id="KW-1185">Reference proteome</keyword>
<organism>
    <name type="scientific">Shewanella denitrificans (strain OS217 / ATCC BAA-1090 / DSM 15013)</name>
    <dbReference type="NCBI Taxonomy" id="318161"/>
    <lineage>
        <taxon>Bacteria</taxon>
        <taxon>Pseudomonadati</taxon>
        <taxon>Pseudomonadota</taxon>
        <taxon>Gammaproteobacteria</taxon>
        <taxon>Alteromonadales</taxon>
        <taxon>Shewanellaceae</taxon>
        <taxon>Shewanella</taxon>
    </lineage>
</organism>
<name>DDL_SHEDO</name>
<proteinExistence type="inferred from homology"/>
<protein>
    <recommendedName>
        <fullName evidence="2">D-alanine--D-alanine ligase</fullName>
        <ecNumber evidence="2">6.3.2.4</ecNumber>
    </recommendedName>
    <alternativeName>
        <fullName evidence="2">D-Ala-D-Ala ligase</fullName>
    </alternativeName>
    <alternativeName>
        <fullName evidence="2">D-alanylalanine synthetase</fullName>
    </alternativeName>
</protein>
<accession>Q12LP2</accession>
<evidence type="ECO:0000250" key="1"/>
<evidence type="ECO:0000255" key="2">
    <source>
        <dbReference type="HAMAP-Rule" id="MF_00047"/>
    </source>
</evidence>
<comment type="function">
    <text evidence="2">Cell wall formation.</text>
</comment>
<comment type="catalytic activity">
    <reaction evidence="2">
        <text>2 D-alanine + ATP = D-alanyl-D-alanine + ADP + phosphate + H(+)</text>
        <dbReference type="Rhea" id="RHEA:11224"/>
        <dbReference type="ChEBI" id="CHEBI:15378"/>
        <dbReference type="ChEBI" id="CHEBI:30616"/>
        <dbReference type="ChEBI" id="CHEBI:43474"/>
        <dbReference type="ChEBI" id="CHEBI:57416"/>
        <dbReference type="ChEBI" id="CHEBI:57822"/>
        <dbReference type="ChEBI" id="CHEBI:456216"/>
        <dbReference type="EC" id="6.3.2.4"/>
    </reaction>
</comment>
<comment type="cofactor">
    <cofactor evidence="1">
        <name>Mg(2+)</name>
        <dbReference type="ChEBI" id="CHEBI:18420"/>
    </cofactor>
    <cofactor evidence="1">
        <name>Mn(2+)</name>
        <dbReference type="ChEBI" id="CHEBI:29035"/>
    </cofactor>
    <text evidence="1">Binds 2 magnesium or manganese ions per subunit.</text>
</comment>
<comment type="pathway">
    <text evidence="2">Cell wall biogenesis; peptidoglycan biosynthesis.</text>
</comment>
<comment type="subcellular location">
    <subcellularLocation>
        <location evidence="2">Cytoplasm</location>
    </subcellularLocation>
</comment>
<comment type="similarity">
    <text evidence="2">Belongs to the D-alanine--D-alanine ligase family.</text>
</comment>
<reference key="1">
    <citation type="submission" date="2006-03" db="EMBL/GenBank/DDBJ databases">
        <title>Complete sequence of Shewanella denitrificans OS217.</title>
        <authorList>
            <consortium name="US DOE Joint Genome Institute"/>
            <person name="Copeland A."/>
            <person name="Lucas S."/>
            <person name="Lapidus A."/>
            <person name="Barry K."/>
            <person name="Detter J.C."/>
            <person name="Glavina del Rio T."/>
            <person name="Hammon N."/>
            <person name="Israni S."/>
            <person name="Dalin E."/>
            <person name="Tice H."/>
            <person name="Pitluck S."/>
            <person name="Brettin T."/>
            <person name="Bruce D."/>
            <person name="Han C."/>
            <person name="Tapia R."/>
            <person name="Gilna P."/>
            <person name="Kiss H."/>
            <person name="Schmutz J."/>
            <person name="Larimer F."/>
            <person name="Land M."/>
            <person name="Hauser L."/>
            <person name="Kyrpides N."/>
            <person name="Lykidis A."/>
            <person name="Richardson P."/>
        </authorList>
    </citation>
    <scope>NUCLEOTIDE SEQUENCE [LARGE SCALE GENOMIC DNA]</scope>
    <source>
        <strain>OS217 / ATCC BAA-1090 / DSM 15013</strain>
    </source>
</reference>
<dbReference type="EC" id="6.3.2.4" evidence="2"/>
<dbReference type="EMBL" id="CP000302">
    <property type="protein sequence ID" value="ABE55634.1"/>
    <property type="molecule type" value="Genomic_DNA"/>
</dbReference>
<dbReference type="RefSeq" id="WP_011496785.1">
    <property type="nucleotide sequence ID" value="NC_007954.1"/>
</dbReference>
<dbReference type="SMR" id="Q12LP2"/>
<dbReference type="STRING" id="318161.Sden_2354"/>
<dbReference type="KEGG" id="sdn:Sden_2354"/>
<dbReference type="eggNOG" id="COG1181">
    <property type="taxonomic scope" value="Bacteria"/>
</dbReference>
<dbReference type="HOGENOM" id="CLU_039268_0_0_6"/>
<dbReference type="OrthoDB" id="9813261at2"/>
<dbReference type="UniPathway" id="UPA00219"/>
<dbReference type="Proteomes" id="UP000001982">
    <property type="component" value="Chromosome"/>
</dbReference>
<dbReference type="GO" id="GO:0005829">
    <property type="term" value="C:cytosol"/>
    <property type="evidence" value="ECO:0007669"/>
    <property type="project" value="TreeGrafter"/>
</dbReference>
<dbReference type="GO" id="GO:0005524">
    <property type="term" value="F:ATP binding"/>
    <property type="evidence" value="ECO:0007669"/>
    <property type="project" value="UniProtKB-KW"/>
</dbReference>
<dbReference type="GO" id="GO:0008716">
    <property type="term" value="F:D-alanine-D-alanine ligase activity"/>
    <property type="evidence" value="ECO:0007669"/>
    <property type="project" value="UniProtKB-UniRule"/>
</dbReference>
<dbReference type="GO" id="GO:0046872">
    <property type="term" value="F:metal ion binding"/>
    <property type="evidence" value="ECO:0007669"/>
    <property type="project" value="UniProtKB-KW"/>
</dbReference>
<dbReference type="GO" id="GO:0071555">
    <property type="term" value="P:cell wall organization"/>
    <property type="evidence" value="ECO:0007669"/>
    <property type="project" value="UniProtKB-KW"/>
</dbReference>
<dbReference type="GO" id="GO:0009252">
    <property type="term" value="P:peptidoglycan biosynthetic process"/>
    <property type="evidence" value="ECO:0007669"/>
    <property type="project" value="UniProtKB-UniRule"/>
</dbReference>
<dbReference type="GO" id="GO:0008360">
    <property type="term" value="P:regulation of cell shape"/>
    <property type="evidence" value="ECO:0007669"/>
    <property type="project" value="UniProtKB-KW"/>
</dbReference>
<dbReference type="Gene3D" id="3.40.50.20">
    <property type="match status" value="1"/>
</dbReference>
<dbReference type="Gene3D" id="3.30.1490.20">
    <property type="entry name" value="ATP-grasp fold, A domain"/>
    <property type="match status" value="1"/>
</dbReference>
<dbReference type="Gene3D" id="3.30.470.20">
    <property type="entry name" value="ATP-grasp fold, B domain"/>
    <property type="match status" value="1"/>
</dbReference>
<dbReference type="HAMAP" id="MF_00047">
    <property type="entry name" value="Dala_Dala_lig"/>
    <property type="match status" value="1"/>
</dbReference>
<dbReference type="InterPro" id="IPR011761">
    <property type="entry name" value="ATP-grasp"/>
</dbReference>
<dbReference type="InterPro" id="IPR013815">
    <property type="entry name" value="ATP_grasp_subdomain_1"/>
</dbReference>
<dbReference type="InterPro" id="IPR000291">
    <property type="entry name" value="D-Ala_lig_Van_CS"/>
</dbReference>
<dbReference type="InterPro" id="IPR005905">
    <property type="entry name" value="D_ala_D_ala"/>
</dbReference>
<dbReference type="InterPro" id="IPR011095">
    <property type="entry name" value="Dala_Dala_lig_C"/>
</dbReference>
<dbReference type="InterPro" id="IPR011127">
    <property type="entry name" value="Dala_Dala_lig_N"/>
</dbReference>
<dbReference type="InterPro" id="IPR016185">
    <property type="entry name" value="PreATP-grasp_dom_sf"/>
</dbReference>
<dbReference type="NCBIfam" id="TIGR01205">
    <property type="entry name" value="D_ala_D_alaTIGR"/>
    <property type="match status" value="1"/>
</dbReference>
<dbReference type="NCBIfam" id="NF002527">
    <property type="entry name" value="PRK01966.1-3"/>
    <property type="match status" value="1"/>
</dbReference>
<dbReference type="NCBIfam" id="NF002528">
    <property type="entry name" value="PRK01966.1-4"/>
    <property type="match status" value="1"/>
</dbReference>
<dbReference type="PANTHER" id="PTHR23132">
    <property type="entry name" value="D-ALANINE--D-ALANINE LIGASE"/>
    <property type="match status" value="1"/>
</dbReference>
<dbReference type="PANTHER" id="PTHR23132:SF25">
    <property type="entry name" value="D-ALANINE--D-ALANINE LIGASE A"/>
    <property type="match status" value="1"/>
</dbReference>
<dbReference type="Pfam" id="PF07478">
    <property type="entry name" value="Dala_Dala_lig_C"/>
    <property type="match status" value="1"/>
</dbReference>
<dbReference type="Pfam" id="PF01820">
    <property type="entry name" value="Dala_Dala_lig_N"/>
    <property type="match status" value="1"/>
</dbReference>
<dbReference type="PIRSF" id="PIRSF039102">
    <property type="entry name" value="Ddl/VanB"/>
    <property type="match status" value="1"/>
</dbReference>
<dbReference type="SUPFAM" id="SSF56059">
    <property type="entry name" value="Glutathione synthetase ATP-binding domain-like"/>
    <property type="match status" value="1"/>
</dbReference>
<dbReference type="SUPFAM" id="SSF52440">
    <property type="entry name" value="PreATP-grasp domain"/>
    <property type="match status" value="1"/>
</dbReference>
<dbReference type="PROSITE" id="PS50975">
    <property type="entry name" value="ATP_GRASP"/>
    <property type="match status" value="1"/>
</dbReference>
<dbReference type="PROSITE" id="PS00843">
    <property type="entry name" value="DALA_DALA_LIGASE_1"/>
    <property type="match status" value="1"/>
</dbReference>
<dbReference type="PROSITE" id="PS00844">
    <property type="entry name" value="DALA_DALA_LIGASE_2"/>
    <property type="match status" value="1"/>
</dbReference>
<sequence>MAKINVLLLCGGGGAEHDISLMSARFFETSLAKSDQFSVLTLTLDKQGRYHTQDGNLCSLTNRREIRFEDPSIAPWAVDYVIPCIHGFPGETGDIQSYFNLIQLPYFGCESEASSNCFNKITAKMWFSALGVPNTPYIFLHQFDQEAIAQTQAAFDTWGSVFIKAASQGSSVGCYKVDVRDNIAKVLEEAFGYAPYVVVEKTIKARELEVAVYEYQGDIIATLPGEIICDTNKFYSFDEKYAKDSKARTDVVASNLSPKLCLQIQDYAIKAFKGMKLRHLSRIDFFLTQDDEILLNEINTFPGLTPISMFPKMLQNHGHDFTEYLSDVISQQLGR</sequence>
<feature type="chain" id="PRO_1000074786" description="D-alanine--D-alanine ligase">
    <location>
        <begin position="1"/>
        <end position="335"/>
    </location>
</feature>
<feature type="domain" description="ATP-grasp" evidence="2">
    <location>
        <begin position="124"/>
        <end position="330"/>
    </location>
</feature>
<feature type="binding site" evidence="2">
    <location>
        <begin position="154"/>
        <end position="209"/>
    </location>
    <ligand>
        <name>ATP</name>
        <dbReference type="ChEBI" id="CHEBI:30616"/>
    </ligand>
</feature>
<feature type="binding site" evidence="2">
    <location>
        <position position="284"/>
    </location>
    <ligand>
        <name>Mg(2+)</name>
        <dbReference type="ChEBI" id="CHEBI:18420"/>
        <label>1</label>
    </ligand>
</feature>
<feature type="binding site" evidence="2">
    <location>
        <position position="297"/>
    </location>
    <ligand>
        <name>Mg(2+)</name>
        <dbReference type="ChEBI" id="CHEBI:18420"/>
        <label>1</label>
    </ligand>
</feature>
<feature type="binding site" evidence="2">
    <location>
        <position position="297"/>
    </location>
    <ligand>
        <name>Mg(2+)</name>
        <dbReference type="ChEBI" id="CHEBI:18420"/>
        <label>2</label>
    </ligand>
</feature>
<feature type="binding site" evidence="2">
    <location>
        <position position="299"/>
    </location>
    <ligand>
        <name>Mg(2+)</name>
        <dbReference type="ChEBI" id="CHEBI:18420"/>
        <label>2</label>
    </ligand>
</feature>
<gene>
    <name evidence="2" type="primary">ddl</name>
    <name type="ordered locus">Sden_2354</name>
</gene>